<gene>
    <name type="primary">bglA</name>
    <name type="synonym">bgl1</name>
</gene>
<name>BGLA_ASPTE</name>
<sequence length="861" mass="93333">MKLSILEAAALTAASVASAQDDLAYSPPYYPSPWADGHGEWSNAYKRAVDIVSQMTLTEKVNLTTGTGWELERCVGQTGSVPRLGIPSLCLQDSPLGIRMSDYNSAFPAGINVAATWDKTLAYQRGKAMGEEFSDKGIDVQLGPAAGPLGRSPDGGRNWEGFSPDPALTGVLFAETIKGIQDAGVIATAKHYILNEQEHFRQVGEAQGYGFNITETVSSNVDDKTMHELYLWPFADAVRAGVGAVMCSYNQINNSYGCQNSLTLNKLLKAELGFQGFVMSDWSAHHSGVGAALAGLDMSMPGDISFDSGTSFYGTNLTVGVLNGTIPQWRVDDMAVRIMAAYYKVGRDRLWTPPNFSSWTRDEYGFAHFFPSEGAYERVNEFVNVQRDHAQVIRRIGADSVVLLKNDGALPLTGQEKTVGILGEDAGSNPKGANGCSDRGCDKGTLAMAWGSGTANFPYLVTPEQAIQNEVLKGRGNVFAVTDNYDTQQIAAVASQSTVSLVFVNADAGEGYLNVDGNMGDRKNLTLWQNGEEVIKTVTEHCNNTVVVIHSVGPVLIDEWYAHPNVTGILWAGLPGQESGNAIADVLYGRVNPGGKTPFTWGKTRASYGDYLLTEPNNGNGAPQDNFNEGVFIDYRRFDKYNETPIYEFGHGLSYTTFELSGLQVQLINGSSYVPTTGQTSAAQTFGKVEDASSYLYPEGLKRISKFIYPWLNSTDLKASTGDPDYGEPNFEYIPEGATDGSPQPRLPASGGPGGNPGLYEDLFQVSVTITNTGKVAGDEVPQLYVSLGGPNEPKRVLRKFERLHLAPGQQKVWTTTLNRRDLANWDVVAQDWKITPYAKTIFVGTSSRKLPLAGRLPRVQ</sequence>
<evidence type="ECO:0000250" key="1"/>
<evidence type="ECO:0000255" key="2"/>
<evidence type="ECO:0000256" key="3">
    <source>
        <dbReference type="SAM" id="MobiDB-lite"/>
    </source>
</evidence>
<evidence type="ECO:0000305" key="4"/>
<comment type="function">
    <text evidence="1">Beta-glucosidases are one of a number of cellulolytic enzymes involved in the degradation of cellulosic biomass. Catalyzes the last step releasing glucose from the inhibitory cellobiose (By similarity).</text>
</comment>
<comment type="catalytic activity">
    <reaction>
        <text>Hydrolysis of terminal, non-reducing beta-D-glucosyl residues with release of beta-D-glucose.</text>
        <dbReference type="EC" id="3.2.1.21"/>
    </reaction>
</comment>
<comment type="pathway">
    <text>Glycan metabolism; cellulose degradation.</text>
</comment>
<comment type="subcellular location">
    <subcellularLocation>
        <location evidence="1">Secreted</location>
    </subcellularLocation>
</comment>
<comment type="similarity">
    <text evidence="4">Belongs to the glycosyl hydrolase 3 family.</text>
</comment>
<protein>
    <recommendedName>
        <fullName>Probable beta-glucosidase A</fullName>
        <ecNumber>3.2.1.21</ecNumber>
    </recommendedName>
    <alternativeName>
        <fullName>Beta-D-glucoside glucohydrolase A</fullName>
    </alternativeName>
    <alternativeName>
        <fullName>Cellobiase A</fullName>
    </alternativeName>
    <alternativeName>
        <fullName>Gentiobiase A</fullName>
    </alternativeName>
</protein>
<proteinExistence type="evidence at transcript level"/>
<accession>D0VKF5</accession>
<feature type="signal peptide" evidence="2">
    <location>
        <begin position="1"/>
        <end position="19"/>
    </location>
</feature>
<feature type="chain" id="PRO_0000394098" description="Probable beta-glucosidase A">
    <location>
        <begin position="20"/>
        <end position="861"/>
    </location>
</feature>
<feature type="region of interest" description="Disordered" evidence="3">
    <location>
        <begin position="735"/>
        <end position="754"/>
    </location>
</feature>
<feature type="active site" evidence="1">
    <location>
        <position position="281"/>
    </location>
</feature>
<feature type="glycosylation site" description="N-linked (GlcNAc...) asparagine" evidence="2">
    <location>
        <position position="62"/>
    </location>
</feature>
<feature type="glycosylation site" description="N-linked (GlcNAc...) asparagine" evidence="2">
    <location>
        <position position="212"/>
    </location>
</feature>
<feature type="glycosylation site" description="N-linked (GlcNAc...) asparagine" evidence="2">
    <location>
        <position position="253"/>
    </location>
</feature>
<feature type="glycosylation site" description="N-linked (GlcNAc...) asparagine" evidence="2">
    <location>
        <position position="316"/>
    </location>
</feature>
<feature type="glycosylation site" description="N-linked (GlcNAc...) asparagine" evidence="2">
    <location>
        <position position="323"/>
    </location>
</feature>
<feature type="glycosylation site" description="N-linked (GlcNAc...) asparagine" evidence="2">
    <location>
        <position position="355"/>
    </location>
</feature>
<feature type="glycosylation site" description="N-linked (GlcNAc...) asparagine" evidence="2">
    <location>
        <position position="524"/>
    </location>
</feature>
<feature type="glycosylation site" description="N-linked (GlcNAc...) asparagine" evidence="2">
    <location>
        <position position="543"/>
    </location>
</feature>
<feature type="glycosylation site" description="N-linked (GlcNAc...) asparagine" evidence="2">
    <location>
        <position position="565"/>
    </location>
</feature>
<feature type="glycosylation site" description="N-linked (GlcNAc...) asparagine" evidence="2">
    <location>
        <position position="669"/>
    </location>
</feature>
<feature type="glycosylation site" description="N-linked (GlcNAc...) asparagine" evidence="2">
    <location>
        <position position="713"/>
    </location>
</feature>
<reference key="1">
    <citation type="submission" date="2009-09" db="EMBL/GenBank/DDBJ databases">
        <authorList>
            <person name="Abdul Hani A.M."/>
            <person name="Shaiful Adzni S."/>
            <person name="Nik Marzuki S."/>
        </authorList>
    </citation>
    <scope>NUCLEOTIDE SEQUENCE [MRNA]</scope>
    <source>
        <strain>SUK-1</strain>
    </source>
</reference>
<dbReference type="EC" id="3.2.1.21"/>
<dbReference type="EMBL" id="GU078571">
    <property type="protein sequence ID" value="ACY03273.1"/>
    <property type="molecule type" value="mRNA"/>
</dbReference>
<dbReference type="SMR" id="D0VKF5"/>
<dbReference type="CAZy" id="GH3">
    <property type="family name" value="Glycoside Hydrolase Family 3"/>
</dbReference>
<dbReference type="GlyCosmos" id="D0VKF5">
    <property type="glycosylation" value="11 sites, No reported glycans"/>
</dbReference>
<dbReference type="VEuPathDB" id="FungiDB:ATEG_03047"/>
<dbReference type="UniPathway" id="UPA00696"/>
<dbReference type="GO" id="GO:0005576">
    <property type="term" value="C:extracellular region"/>
    <property type="evidence" value="ECO:0007669"/>
    <property type="project" value="UniProtKB-SubCell"/>
</dbReference>
<dbReference type="GO" id="GO:0008422">
    <property type="term" value="F:beta-glucosidase activity"/>
    <property type="evidence" value="ECO:0007669"/>
    <property type="project" value="UniProtKB-EC"/>
</dbReference>
<dbReference type="GO" id="GO:0030245">
    <property type="term" value="P:cellulose catabolic process"/>
    <property type="evidence" value="ECO:0007669"/>
    <property type="project" value="UniProtKB-UniPathway"/>
</dbReference>
<dbReference type="FunFam" id="2.60.40.10:FF:001391">
    <property type="entry name" value="Beta-glucosidase"/>
    <property type="match status" value="1"/>
</dbReference>
<dbReference type="FunFam" id="3.20.20.300:FF:000002">
    <property type="entry name" value="Probable beta-glucosidase"/>
    <property type="match status" value="1"/>
</dbReference>
<dbReference type="FunFam" id="3.40.50.1700:FF:000003">
    <property type="entry name" value="Probable beta-glucosidase"/>
    <property type="match status" value="1"/>
</dbReference>
<dbReference type="Gene3D" id="3.40.50.1700">
    <property type="entry name" value="Glycoside hydrolase family 3 C-terminal domain"/>
    <property type="match status" value="1"/>
</dbReference>
<dbReference type="Gene3D" id="3.20.20.300">
    <property type="entry name" value="Glycoside hydrolase, family 3, N-terminal domain"/>
    <property type="match status" value="1"/>
</dbReference>
<dbReference type="Gene3D" id="2.60.40.10">
    <property type="entry name" value="Immunoglobulins"/>
    <property type="match status" value="1"/>
</dbReference>
<dbReference type="InterPro" id="IPR050288">
    <property type="entry name" value="Cellulose_deg_GH3"/>
</dbReference>
<dbReference type="InterPro" id="IPR026891">
    <property type="entry name" value="Fn3-like"/>
</dbReference>
<dbReference type="InterPro" id="IPR019800">
    <property type="entry name" value="Glyco_hydro_3_AS"/>
</dbReference>
<dbReference type="InterPro" id="IPR002772">
    <property type="entry name" value="Glyco_hydro_3_C"/>
</dbReference>
<dbReference type="InterPro" id="IPR036881">
    <property type="entry name" value="Glyco_hydro_3_C_sf"/>
</dbReference>
<dbReference type="InterPro" id="IPR001764">
    <property type="entry name" value="Glyco_hydro_3_N"/>
</dbReference>
<dbReference type="InterPro" id="IPR036962">
    <property type="entry name" value="Glyco_hydro_3_N_sf"/>
</dbReference>
<dbReference type="InterPro" id="IPR017853">
    <property type="entry name" value="Glycoside_hydrolase_SF"/>
</dbReference>
<dbReference type="InterPro" id="IPR013783">
    <property type="entry name" value="Ig-like_fold"/>
</dbReference>
<dbReference type="PANTHER" id="PTHR42715">
    <property type="entry name" value="BETA-GLUCOSIDASE"/>
    <property type="match status" value="1"/>
</dbReference>
<dbReference type="PANTHER" id="PTHR42715:SF29">
    <property type="entry name" value="BETA-GLUCOSIDASE A-RELATED"/>
    <property type="match status" value="1"/>
</dbReference>
<dbReference type="Pfam" id="PF14310">
    <property type="entry name" value="Fn3-like"/>
    <property type="match status" value="1"/>
</dbReference>
<dbReference type="Pfam" id="PF00933">
    <property type="entry name" value="Glyco_hydro_3"/>
    <property type="match status" value="1"/>
</dbReference>
<dbReference type="Pfam" id="PF01915">
    <property type="entry name" value="Glyco_hydro_3_C"/>
    <property type="match status" value="1"/>
</dbReference>
<dbReference type="PRINTS" id="PR00133">
    <property type="entry name" value="GLHYDRLASE3"/>
</dbReference>
<dbReference type="SMART" id="SM01217">
    <property type="entry name" value="Fn3_like"/>
    <property type="match status" value="1"/>
</dbReference>
<dbReference type="SUPFAM" id="SSF51445">
    <property type="entry name" value="(Trans)glycosidases"/>
    <property type="match status" value="1"/>
</dbReference>
<dbReference type="SUPFAM" id="SSF52279">
    <property type="entry name" value="Beta-D-glucan exohydrolase, C-terminal domain"/>
    <property type="match status" value="1"/>
</dbReference>
<dbReference type="PROSITE" id="PS00775">
    <property type="entry name" value="GLYCOSYL_HYDROL_F3"/>
    <property type="match status" value="1"/>
</dbReference>
<keyword id="KW-0119">Carbohydrate metabolism</keyword>
<keyword id="KW-0136">Cellulose degradation</keyword>
<keyword id="KW-0325">Glycoprotein</keyword>
<keyword id="KW-0326">Glycosidase</keyword>
<keyword id="KW-0378">Hydrolase</keyword>
<keyword id="KW-0624">Polysaccharide degradation</keyword>
<keyword id="KW-0964">Secreted</keyword>
<keyword id="KW-0732">Signal</keyword>
<organism>
    <name type="scientific">Aspergillus terreus</name>
    <dbReference type="NCBI Taxonomy" id="33178"/>
    <lineage>
        <taxon>Eukaryota</taxon>
        <taxon>Fungi</taxon>
        <taxon>Dikarya</taxon>
        <taxon>Ascomycota</taxon>
        <taxon>Pezizomycotina</taxon>
        <taxon>Eurotiomycetes</taxon>
        <taxon>Eurotiomycetidae</taxon>
        <taxon>Eurotiales</taxon>
        <taxon>Aspergillaceae</taxon>
        <taxon>Aspergillus</taxon>
        <taxon>Aspergillus subgen. Circumdati</taxon>
    </lineage>
</organism>